<sequence>MGDPKRQRKKYETPPHPWIKERLDRERVLMDKYELKNKKELWKHETQLKNFRRRARRLLAARGKQAEIEREQLLARLKRLGLLPEDAVLDDVLSLTIEDILERRLQTIVYKKGLARTMRQARQLIVHGHIEVNGQIIRSPSYLVLKEEEDTITYARTSPFANPQHPERMMIEKAKQGGEA</sequence>
<reference key="1">
    <citation type="journal article" date="2003" name="Mol. Microbiol.">
        <title>An integrated analysis of the genome of the hyperthermophilic archaeon Pyrococcus abyssi.</title>
        <authorList>
            <person name="Cohen G.N."/>
            <person name="Barbe V."/>
            <person name="Flament D."/>
            <person name="Galperin M."/>
            <person name="Heilig R."/>
            <person name="Lecompte O."/>
            <person name="Poch O."/>
            <person name="Prieur D."/>
            <person name="Querellou J."/>
            <person name="Ripp R."/>
            <person name="Thierry J.-C."/>
            <person name="Van der Oost J."/>
            <person name="Weissenbach J."/>
            <person name="Zivanovic Y."/>
            <person name="Forterre P."/>
        </authorList>
    </citation>
    <scope>NUCLEOTIDE SEQUENCE [LARGE SCALE GENOMIC DNA]</scope>
    <source>
        <strain>GE5 / Orsay</strain>
    </source>
</reference>
<reference key="2">
    <citation type="journal article" date="2012" name="Curr. Microbiol.">
        <title>Re-annotation of two hyperthermophilic archaea Pyrococcus abyssi GE5 and Pyrococcus furiosus DSM 3638.</title>
        <authorList>
            <person name="Gao J."/>
            <person name="Wang J."/>
        </authorList>
    </citation>
    <scope>GENOME REANNOTATION</scope>
    <source>
        <strain>GE5 / Orsay</strain>
    </source>
</reference>
<feature type="chain" id="PRO_0000132515" description="Small ribosomal subunit protein uS4">
    <location>
        <begin position="1"/>
        <end position="180"/>
    </location>
</feature>
<feature type="domain" description="S4 RNA-binding" evidence="1">
    <location>
        <begin position="103"/>
        <end position="174"/>
    </location>
</feature>
<feature type="strand" evidence="4">
    <location>
        <begin position="15"/>
        <end position="17"/>
    </location>
</feature>
<feature type="helix" evidence="4">
    <location>
        <begin position="20"/>
        <end position="33"/>
    </location>
</feature>
<feature type="helix" evidence="4">
    <location>
        <begin position="38"/>
        <end position="59"/>
    </location>
</feature>
<feature type="helix" evidence="4">
    <location>
        <begin position="64"/>
        <end position="79"/>
    </location>
</feature>
<feature type="strand" evidence="3">
    <location>
        <begin position="80"/>
        <end position="83"/>
    </location>
</feature>
<feature type="helix" evidence="4">
    <location>
        <begin position="89"/>
        <end position="94"/>
    </location>
</feature>
<feature type="helix" evidence="4">
    <location>
        <begin position="97"/>
        <end position="101"/>
    </location>
</feature>
<feature type="helix" evidence="4">
    <location>
        <begin position="105"/>
        <end position="111"/>
    </location>
</feature>
<feature type="strand" evidence="4">
    <location>
        <begin position="114"/>
        <end position="117"/>
    </location>
</feature>
<feature type="helix" evidence="4">
    <location>
        <begin position="118"/>
        <end position="127"/>
    </location>
</feature>
<feature type="strand" evidence="4">
    <location>
        <begin position="130"/>
        <end position="132"/>
    </location>
</feature>
<feature type="helix" evidence="4">
    <location>
        <begin position="146"/>
        <end position="148"/>
    </location>
</feature>
<feature type="strand" evidence="4">
    <location>
        <begin position="151"/>
        <end position="154"/>
    </location>
</feature>
<feature type="helix" evidence="4">
    <location>
        <begin position="166"/>
        <end position="172"/>
    </location>
</feature>
<protein>
    <recommendedName>
        <fullName evidence="1">Small ribosomal subunit protein uS4</fullName>
    </recommendedName>
    <alternativeName>
        <fullName evidence="2">30S ribosomal protein S4</fullName>
    </alternativeName>
</protein>
<proteinExistence type="evidence at protein level"/>
<keyword id="KW-0002">3D-structure</keyword>
<keyword id="KW-0687">Ribonucleoprotein</keyword>
<keyword id="KW-0689">Ribosomal protein</keyword>
<keyword id="KW-0694">RNA-binding</keyword>
<keyword id="KW-0699">rRNA-binding</keyword>
<name>RS4_PYRAB</name>
<comment type="function">
    <text evidence="1">One of the primary rRNA binding proteins, it binds directly to 16S rRNA where it nucleates assembly of the body of the 30S subunit.</text>
</comment>
<comment type="function">
    <text evidence="1">With S5 and S12 plays an important role in translational accuracy.</text>
</comment>
<comment type="subunit">
    <text evidence="1">Part of the 30S ribosomal subunit. Contacts protein S5. The interaction surface between S4 and S5 is involved in control of translational fidelity.</text>
</comment>
<comment type="similarity">
    <text evidence="1">Belongs to the universal ribosomal protein uS4 family.</text>
</comment>
<organism>
    <name type="scientific">Pyrococcus abyssi (strain GE5 / Orsay)</name>
    <dbReference type="NCBI Taxonomy" id="272844"/>
    <lineage>
        <taxon>Archaea</taxon>
        <taxon>Methanobacteriati</taxon>
        <taxon>Methanobacteriota</taxon>
        <taxon>Thermococci</taxon>
        <taxon>Thermococcales</taxon>
        <taxon>Thermococcaceae</taxon>
        <taxon>Pyrococcus</taxon>
    </lineage>
</organism>
<accession>P61992</accession>
<accession>G8ZGN8</accession>
<accession>Q9V199</accession>
<gene>
    <name evidence="1" type="primary">rps4</name>
    <name type="ordered locus">PYRAB05280</name>
    <name type="ORF">PAB0361</name>
</gene>
<dbReference type="EMBL" id="AJ248284">
    <property type="protein sequence ID" value="CAB49450.1"/>
    <property type="molecule type" value="Genomic_DNA"/>
</dbReference>
<dbReference type="EMBL" id="HE613800">
    <property type="protein sequence ID" value="CCE69917.1"/>
    <property type="molecule type" value="Genomic_DNA"/>
</dbReference>
<dbReference type="PIR" id="C75171">
    <property type="entry name" value="C75171"/>
</dbReference>
<dbReference type="RefSeq" id="WP_010867652.1">
    <property type="nucleotide sequence ID" value="NC_000868.1"/>
</dbReference>
<dbReference type="PDB" id="5JB3">
    <property type="method" value="EM"/>
    <property type="resolution" value="5.34 A"/>
    <property type="chains" value="D=1-180"/>
</dbReference>
<dbReference type="PDB" id="5JBH">
    <property type="method" value="EM"/>
    <property type="resolution" value="5.34 A"/>
    <property type="chains" value="D=1-180"/>
</dbReference>
<dbReference type="PDB" id="6SW9">
    <property type="method" value="EM"/>
    <property type="resolution" value="4.20 A"/>
    <property type="chains" value="D=1-180"/>
</dbReference>
<dbReference type="PDB" id="6SWC">
    <property type="method" value="EM"/>
    <property type="resolution" value="3.30 A"/>
    <property type="chains" value="D=1-180"/>
</dbReference>
<dbReference type="PDB" id="6SWD">
    <property type="method" value="EM"/>
    <property type="resolution" value="3.20 A"/>
    <property type="chains" value="D=1-180"/>
</dbReference>
<dbReference type="PDB" id="7ZAG">
    <property type="method" value="EM"/>
    <property type="resolution" value="2.77 A"/>
    <property type="chains" value="D=1-180"/>
</dbReference>
<dbReference type="PDB" id="7ZAH">
    <property type="method" value="EM"/>
    <property type="resolution" value="2.70 A"/>
    <property type="chains" value="D=1-180"/>
</dbReference>
<dbReference type="PDB" id="7ZAI">
    <property type="method" value="EM"/>
    <property type="resolution" value="2.60 A"/>
    <property type="chains" value="D=1-180"/>
</dbReference>
<dbReference type="PDB" id="7ZHG">
    <property type="method" value="EM"/>
    <property type="resolution" value="2.25 A"/>
    <property type="chains" value="D=1-180"/>
</dbReference>
<dbReference type="PDBsum" id="5JB3"/>
<dbReference type="PDBsum" id="5JBH"/>
<dbReference type="PDBsum" id="6SW9"/>
<dbReference type="PDBsum" id="6SWC"/>
<dbReference type="PDBsum" id="6SWD"/>
<dbReference type="PDBsum" id="7ZAG"/>
<dbReference type="PDBsum" id="7ZAH"/>
<dbReference type="PDBsum" id="7ZAI"/>
<dbReference type="PDBsum" id="7ZHG"/>
<dbReference type="EMDB" id="EMD-10320"/>
<dbReference type="EMDB" id="EMD-10322"/>
<dbReference type="EMDB" id="EMD-10323"/>
<dbReference type="EMDB" id="EMD-14579"/>
<dbReference type="EMDB" id="EMD-14580"/>
<dbReference type="EMDB" id="EMD-14581"/>
<dbReference type="EMDB" id="EMD-14731"/>
<dbReference type="EMDB" id="EMD-8148"/>
<dbReference type="EMDB" id="EMD-8149"/>
<dbReference type="SMR" id="P61992"/>
<dbReference type="STRING" id="272844.PAB0361"/>
<dbReference type="KEGG" id="pab:PAB0361"/>
<dbReference type="PATRIC" id="fig|272844.11.peg.563"/>
<dbReference type="eggNOG" id="arCOG04239">
    <property type="taxonomic scope" value="Archaea"/>
</dbReference>
<dbReference type="HOGENOM" id="CLU_089738_1_1_2"/>
<dbReference type="OrthoDB" id="10429at2157"/>
<dbReference type="PhylomeDB" id="P61992"/>
<dbReference type="Proteomes" id="UP000000810">
    <property type="component" value="Chromosome"/>
</dbReference>
<dbReference type="Proteomes" id="UP000009139">
    <property type="component" value="Chromosome"/>
</dbReference>
<dbReference type="GO" id="GO:0015935">
    <property type="term" value="C:small ribosomal subunit"/>
    <property type="evidence" value="ECO:0007669"/>
    <property type="project" value="InterPro"/>
</dbReference>
<dbReference type="GO" id="GO:0019843">
    <property type="term" value="F:rRNA binding"/>
    <property type="evidence" value="ECO:0007669"/>
    <property type="project" value="UniProtKB-UniRule"/>
</dbReference>
<dbReference type="GO" id="GO:0003735">
    <property type="term" value="F:structural constituent of ribosome"/>
    <property type="evidence" value="ECO:0007669"/>
    <property type="project" value="InterPro"/>
</dbReference>
<dbReference type="GO" id="GO:0042274">
    <property type="term" value="P:ribosomal small subunit biogenesis"/>
    <property type="evidence" value="ECO:0007669"/>
    <property type="project" value="TreeGrafter"/>
</dbReference>
<dbReference type="GO" id="GO:0006412">
    <property type="term" value="P:translation"/>
    <property type="evidence" value="ECO:0007669"/>
    <property type="project" value="UniProtKB-UniRule"/>
</dbReference>
<dbReference type="CDD" id="cd00165">
    <property type="entry name" value="S4"/>
    <property type="match status" value="1"/>
</dbReference>
<dbReference type="FunFam" id="3.10.290.10:FF:000026">
    <property type="entry name" value="30S ribosomal protein S4"/>
    <property type="match status" value="1"/>
</dbReference>
<dbReference type="Gene3D" id="3.10.290.10">
    <property type="entry name" value="RNA-binding S4 domain"/>
    <property type="match status" value="1"/>
</dbReference>
<dbReference type="HAMAP" id="MF_01306_A">
    <property type="entry name" value="Ribosomal_uS4_A"/>
    <property type="match status" value="1"/>
</dbReference>
<dbReference type="InterPro" id="IPR022801">
    <property type="entry name" value="Ribosomal_uS4"/>
</dbReference>
<dbReference type="InterPro" id="IPR022802">
    <property type="entry name" value="Ribosomal_uS4_arc"/>
</dbReference>
<dbReference type="InterPro" id="IPR018079">
    <property type="entry name" value="Ribosomal_uS4_CS"/>
</dbReference>
<dbReference type="InterPro" id="IPR005710">
    <property type="entry name" value="Ribosomal_uS4_euk/arc"/>
</dbReference>
<dbReference type="InterPro" id="IPR001912">
    <property type="entry name" value="Ribosomal_uS4_N"/>
</dbReference>
<dbReference type="InterPro" id="IPR002942">
    <property type="entry name" value="S4_RNA-bd"/>
</dbReference>
<dbReference type="InterPro" id="IPR036986">
    <property type="entry name" value="S4_RNA-bd_sf"/>
</dbReference>
<dbReference type="NCBIfam" id="NF003139">
    <property type="entry name" value="PRK04051.1"/>
    <property type="match status" value="1"/>
</dbReference>
<dbReference type="NCBIfam" id="TIGR01018">
    <property type="entry name" value="uS4_arch"/>
    <property type="match status" value="1"/>
</dbReference>
<dbReference type="PANTHER" id="PTHR11831">
    <property type="entry name" value="30S 40S RIBOSOMAL PROTEIN"/>
    <property type="match status" value="1"/>
</dbReference>
<dbReference type="PANTHER" id="PTHR11831:SF5">
    <property type="entry name" value="40S RIBOSOMAL PROTEIN S9"/>
    <property type="match status" value="1"/>
</dbReference>
<dbReference type="Pfam" id="PF00163">
    <property type="entry name" value="Ribosomal_S4"/>
    <property type="match status" value="1"/>
</dbReference>
<dbReference type="Pfam" id="PF01479">
    <property type="entry name" value="S4"/>
    <property type="match status" value="1"/>
</dbReference>
<dbReference type="SMART" id="SM01390">
    <property type="entry name" value="Ribosomal_S4"/>
    <property type="match status" value="1"/>
</dbReference>
<dbReference type="SMART" id="SM00363">
    <property type="entry name" value="S4"/>
    <property type="match status" value="1"/>
</dbReference>
<dbReference type="SUPFAM" id="SSF55174">
    <property type="entry name" value="Alpha-L RNA-binding motif"/>
    <property type="match status" value="1"/>
</dbReference>
<dbReference type="PROSITE" id="PS00632">
    <property type="entry name" value="RIBOSOMAL_S4"/>
    <property type="match status" value="1"/>
</dbReference>
<dbReference type="PROSITE" id="PS50889">
    <property type="entry name" value="S4"/>
    <property type="match status" value="1"/>
</dbReference>
<evidence type="ECO:0000255" key="1">
    <source>
        <dbReference type="HAMAP-Rule" id="MF_01306"/>
    </source>
</evidence>
<evidence type="ECO:0000305" key="2"/>
<evidence type="ECO:0007829" key="3">
    <source>
        <dbReference type="PDB" id="6SWC"/>
    </source>
</evidence>
<evidence type="ECO:0007829" key="4">
    <source>
        <dbReference type="PDB" id="7ZHG"/>
    </source>
</evidence>